<gene>
    <name evidence="1" type="primary">infA</name>
    <name type="ordered locus">CKO_02188</name>
</gene>
<dbReference type="EMBL" id="CP000822">
    <property type="protein sequence ID" value="ABV13312.1"/>
    <property type="molecule type" value="Genomic_DNA"/>
</dbReference>
<dbReference type="RefSeq" id="WP_001040187.1">
    <property type="nucleotide sequence ID" value="NC_009792.1"/>
</dbReference>
<dbReference type="SMR" id="A8AIJ9"/>
<dbReference type="STRING" id="290338.CKO_02188"/>
<dbReference type="GeneID" id="93776536"/>
<dbReference type="KEGG" id="cko:CKO_02188"/>
<dbReference type="HOGENOM" id="CLU_151267_1_0_6"/>
<dbReference type="OrthoDB" id="9803250at2"/>
<dbReference type="Proteomes" id="UP000008148">
    <property type="component" value="Chromosome"/>
</dbReference>
<dbReference type="GO" id="GO:0005829">
    <property type="term" value="C:cytosol"/>
    <property type="evidence" value="ECO:0007669"/>
    <property type="project" value="TreeGrafter"/>
</dbReference>
<dbReference type="GO" id="GO:0043022">
    <property type="term" value="F:ribosome binding"/>
    <property type="evidence" value="ECO:0007669"/>
    <property type="project" value="UniProtKB-UniRule"/>
</dbReference>
<dbReference type="GO" id="GO:0019843">
    <property type="term" value="F:rRNA binding"/>
    <property type="evidence" value="ECO:0007669"/>
    <property type="project" value="UniProtKB-UniRule"/>
</dbReference>
<dbReference type="GO" id="GO:0003743">
    <property type="term" value="F:translation initiation factor activity"/>
    <property type="evidence" value="ECO:0007669"/>
    <property type="project" value="UniProtKB-UniRule"/>
</dbReference>
<dbReference type="CDD" id="cd04451">
    <property type="entry name" value="S1_IF1"/>
    <property type="match status" value="1"/>
</dbReference>
<dbReference type="FunFam" id="2.40.50.140:FF:000002">
    <property type="entry name" value="Translation initiation factor IF-1"/>
    <property type="match status" value="1"/>
</dbReference>
<dbReference type="Gene3D" id="2.40.50.140">
    <property type="entry name" value="Nucleic acid-binding proteins"/>
    <property type="match status" value="1"/>
</dbReference>
<dbReference type="HAMAP" id="MF_00075">
    <property type="entry name" value="IF_1"/>
    <property type="match status" value="1"/>
</dbReference>
<dbReference type="InterPro" id="IPR012340">
    <property type="entry name" value="NA-bd_OB-fold"/>
</dbReference>
<dbReference type="InterPro" id="IPR006196">
    <property type="entry name" value="RNA-binding_domain_S1_IF1"/>
</dbReference>
<dbReference type="InterPro" id="IPR003029">
    <property type="entry name" value="S1_domain"/>
</dbReference>
<dbReference type="InterPro" id="IPR004368">
    <property type="entry name" value="TIF_IF1"/>
</dbReference>
<dbReference type="NCBIfam" id="TIGR00008">
    <property type="entry name" value="infA"/>
    <property type="match status" value="1"/>
</dbReference>
<dbReference type="PANTHER" id="PTHR33370">
    <property type="entry name" value="TRANSLATION INITIATION FACTOR IF-1, CHLOROPLASTIC"/>
    <property type="match status" value="1"/>
</dbReference>
<dbReference type="PANTHER" id="PTHR33370:SF1">
    <property type="entry name" value="TRANSLATION INITIATION FACTOR IF-1, CHLOROPLASTIC"/>
    <property type="match status" value="1"/>
</dbReference>
<dbReference type="Pfam" id="PF01176">
    <property type="entry name" value="eIF-1a"/>
    <property type="match status" value="1"/>
</dbReference>
<dbReference type="SMART" id="SM00316">
    <property type="entry name" value="S1"/>
    <property type="match status" value="1"/>
</dbReference>
<dbReference type="SUPFAM" id="SSF50249">
    <property type="entry name" value="Nucleic acid-binding proteins"/>
    <property type="match status" value="1"/>
</dbReference>
<dbReference type="PROSITE" id="PS50832">
    <property type="entry name" value="S1_IF1_TYPE"/>
    <property type="match status" value="1"/>
</dbReference>
<protein>
    <recommendedName>
        <fullName evidence="1">Translation initiation factor IF-1</fullName>
    </recommendedName>
</protein>
<reference key="1">
    <citation type="submission" date="2007-08" db="EMBL/GenBank/DDBJ databases">
        <authorList>
            <consortium name="The Citrobacter koseri Genome Sequencing Project"/>
            <person name="McClelland M."/>
            <person name="Sanderson E.K."/>
            <person name="Porwollik S."/>
            <person name="Spieth J."/>
            <person name="Clifton W.S."/>
            <person name="Latreille P."/>
            <person name="Courtney L."/>
            <person name="Wang C."/>
            <person name="Pepin K."/>
            <person name="Bhonagiri V."/>
            <person name="Nash W."/>
            <person name="Johnson M."/>
            <person name="Thiruvilangam P."/>
            <person name="Wilson R."/>
        </authorList>
    </citation>
    <scope>NUCLEOTIDE SEQUENCE [LARGE SCALE GENOMIC DNA]</scope>
    <source>
        <strain>ATCC BAA-895 / CDC 4225-83 / SGSC4696</strain>
    </source>
</reference>
<sequence>MAKEDNIEMQGTVLETLPNTMFRVELENGHVVTAHISGKMRKNYIRILTGDKVTVELTPYDLSKGRIVFRSR</sequence>
<feature type="chain" id="PRO_0000338799" description="Translation initiation factor IF-1">
    <location>
        <begin position="1"/>
        <end position="72"/>
    </location>
</feature>
<feature type="domain" description="S1-like" evidence="1">
    <location>
        <begin position="1"/>
        <end position="72"/>
    </location>
</feature>
<accession>A8AIJ9</accession>
<evidence type="ECO:0000255" key="1">
    <source>
        <dbReference type="HAMAP-Rule" id="MF_00075"/>
    </source>
</evidence>
<comment type="function">
    <text evidence="1">One of the essential components for the initiation of protein synthesis. Stabilizes the binding of IF-2 and IF-3 on the 30S subunit to which N-formylmethionyl-tRNA(fMet) subsequently binds. Helps modulate mRNA selection, yielding the 30S pre-initiation complex (PIC). Upon addition of the 50S ribosomal subunit IF-1, IF-2 and IF-3 are released leaving the mature 70S translation initiation complex.</text>
</comment>
<comment type="subunit">
    <text evidence="1">Component of the 30S ribosomal translation pre-initiation complex which assembles on the 30S ribosome in the order IF-2 and IF-3, IF-1 and N-formylmethionyl-tRNA(fMet); mRNA recruitment can occur at any time during PIC assembly.</text>
</comment>
<comment type="subcellular location">
    <subcellularLocation>
        <location evidence="1">Cytoplasm</location>
    </subcellularLocation>
</comment>
<comment type="similarity">
    <text evidence="1">Belongs to the IF-1 family.</text>
</comment>
<name>IF1_CITK8</name>
<keyword id="KW-0963">Cytoplasm</keyword>
<keyword id="KW-0396">Initiation factor</keyword>
<keyword id="KW-0648">Protein biosynthesis</keyword>
<keyword id="KW-1185">Reference proteome</keyword>
<keyword id="KW-0694">RNA-binding</keyword>
<keyword id="KW-0699">rRNA-binding</keyword>
<organism>
    <name type="scientific">Citrobacter koseri (strain ATCC BAA-895 / CDC 4225-83 / SGSC4696)</name>
    <dbReference type="NCBI Taxonomy" id="290338"/>
    <lineage>
        <taxon>Bacteria</taxon>
        <taxon>Pseudomonadati</taxon>
        <taxon>Pseudomonadota</taxon>
        <taxon>Gammaproteobacteria</taxon>
        <taxon>Enterobacterales</taxon>
        <taxon>Enterobacteriaceae</taxon>
        <taxon>Citrobacter</taxon>
    </lineage>
</organism>
<proteinExistence type="inferred from homology"/>